<reference key="1">
    <citation type="journal article" date="2006" name="PLoS Genet.">
        <title>Genome sequence of Rickettsia bellii illuminates the role of amoebae in gene exchanges between intracellular pathogens.</title>
        <authorList>
            <person name="Ogata H."/>
            <person name="La Scola B."/>
            <person name="Audic S."/>
            <person name="Renesto P."/>
            <person name="Blanc G."/>
            <person name="Robert C."/>
            <person name="Fournier P.-E."/>
            <person name="Claverie J.-M."/>
            <person name="Raoult D."/>
        </authorList>
    </citation>
    <scope>NUCLEOTIDE SEQUENCE [LARGE SCALE GENOMIC DNA]</scope>
    <source>
        <strain>RML369-C</strain>
    </source>
</reference>
<keyword id="KW-0378">Hydrolase</keyword>
<keyword id="KW-0441">Lipid A biosynthesis</keyword>
<keyword id="KW-0444">Lipid biosynthesis</keyword>
<keyword id="KW-0443">Lipid metabolism</keyword>
<keyword id="KW-0479">Metal-binding</keyword>
<keyword id="KW-0862">Zinc</keyword>
<dbReference type="EC" id="3.5.1.108" evidence="1"/>
<dbReference type="EMBL" id="CP000087">
    <property type="protein sequence ID" value="ABE05035.1"/>
    <property type="molecule type" value="Genomic_DNA"/>
</dbReference>
<dbReference type="RefSeq" id="WP_011477616.1">
    <property type="nucleotide sequence ID" value="NC_007940.1"/>
</dbReference>
<dbReference type="SMR" id="Q1RHX9"/>
<dbReference type="KEGG" id="rbe:RBE_0954"/>
<dbReference type="eggNOG" id="COG0774">
    <property type="taxonomic scope" value="Bacteria"/>
</dbReference>
<dbReference type="HOGENOM" id="CLU_046528_1_1_5"/>
<dbReference type="OrthoDB" id="9802746at2"/>
<dbReference type="UniPathway" id="UPA00359">
    <property type="reaction ID" value="UER00478"/>
</dbReference>
<dbReference type="Proteomes" id="UP000001951">
    <property type="component" value="Chromosome"/>
</dbReference>
<dbReference type="GO" id="GO:0016020">
    <property type="term" value="C:membrane"/>
    <property type="evidence" value="ECO:0007669"/>
    <property type="project" value="GOC"/>
</dbReference>
<dbReference type="GO" id="GO:0046872">
    <property type="term" value="F:metal ion binding"/>
    <property type="evidence" value="ECO:0007669"/>
    <property type="project" value="UniProtKB-KW"/>
</dbReference>
<dbReference type="GO" id="GO:0103117">
    <property type="term" value="F:UDP-3-O-acyl-N-acetylglucosamine deacetylase activity"/>
    <property type="evidence" value="ECO:0007669"/>
    <property type="project" value="UniProtKB-UniRule"/>
</dbReference>
<dbReference type="GO" id="GO:0009245">
    <property type="term" value="P:lipid A biosynthetic process"/>
    <property type="evidence" value="ECO:0007669"/>
    <property type="project" value="UniProtKB-UniRule"/>
</dbReference>
<dbReference type="Gene3D" id="3.30.230.20">
    <property type="entry name" value="lpxc deacetylase, domain 1"/>
    <property type="match status" value="1"/>
</dbReference>
<dbReference type="Gene3D" id="3.30.1700.10">
    <property type="entry name" value="lpxc deacetylase, domain 2"/>
    <property type="match status" value="1"/>
</dbReference>
<dbReference type="HAMAP" id="MF_00388">
    <property type="entry name" value="LpxC"/>
    <property type="match status" value="1"/>
</dbReference>
<dbReference type="InterPro" id="IPR020568">
    <property type="entry name" value="Ribosomal_Su5_D2-typ_SF"/>
</dbReference>
<dbReference type="InterPro" id="IPR004463">
    <property type="entry name" value="UDP-acyl_GlcNac_deAcase"/>
</dbReference>
<dbReference type="InterPro" id="IPR011334">
    <property type="entry name" value="UDP-acyl_GlcNac_deAcase_C"/>
</dbReference>
<dbReference type="InterPro" id="IPR015870">
    <property type="entry name" value="UDP-acyl_N-AcGlcN_deAcase_N"/>
</dbReference>
<dbReference type="NCBIfam" id="TIGR00325">
    <property type="entry name" value="lpxC"/>
    <property type="match status" value="1"/>
</dbReference>
<dbReference type="PANTHER" id="PTHR33694">
    <property type="entry name" value="UDP-3-O-ACYL-N-ACETYLGLUCOSAMINE DEACETYLASE 1, MITOCHONDRIAL-RELATED"/>
    <property type="match status" value="1"/>
</dbReference>
<dbReference type="PANTHER" id="PTHR33694:SF1">
    <property type="entry name" value="UDP-3-O-ACYL-N-ACETYLGLUCOSAMINE DEACETYLASE 1, MITOCHONDRIAL-RELATED"/>
    <property type="match status" value="1"/>
</dbReference>
<dbReference type="Pfam" id="PF03331">
    <property type="entry name" value="LpxC"/>
    <property type="match status" value="1"/>
</dbReference>
<dbReference type="SUPFAM" id="SSF54211">
    <property type="entry name" value="Ribosomal protein S5 domain 2-like"/>
    <property type="match status" value="2"/>
</dbReference>
<sequence>MQQITLSKPVSCYGIGVHSGKRTQLTIEPAKENTGIIFIRTDISSENNYIEAKYFNVSDTLLSTTISNSNKIQVSTIEHIMAALWGCGIDNAVIKIDGPEVPIMDGSSKPFVFMIECAGKKLQNAPKKYLKILKEVTATHKDCELTCTPSDHMKIDLTIDFNSKAIGRQNLVFSKQESFNNNIADARTFGFTKDGDYLQSKGLALGVSFENTIAIDDQDKVLNPDGLRYQDEFVRHKLLDLFGDLYTSGNNIVSSINGYKTSHALNNELLQRIFSDNTSHKFVTASEI</sequence>
<organism>
    <name type="scientific">Rickettsia bellii (strain RML369-C)</name>
    <dbReference type="NCBI Taxonomy" id="336407"/>
    <lineage>
        <taxon>Bacteria</taxon>
        <taxon>Pseudomonadati</taxon>
        <taxon>Pseudomonadota</taxon>
        <taxon>Alphaproteobacteria</taxon>
        <taxon>Rickettsiales</taxon>
        <taxon>Rickettsiaceae</taxon>
        <taxon>Rickettsieae</taxon>
        <taxon>Rickettsia</taxon>
        <taxon>belli group</taxon>
    </lineage>
</organism>
<name>LPXC_RICBR</name>
<accession>Q1RHX9</accession>
<proteinExistence type="inferred from homology"/>
<feature type="chain" id="PRO_0000253691" description="UDP-3-O-acyl-N-acetylglucosamine deacetylase">
    <location>
        <begin position="1"/>
        <end position="288"/>
    </location>
</feature>
<feature type="active site" description="Proton donor" evidence="1">
    <location>
        <position position="263"/>
    </location>
</feature>
<feature type="binding site" evidence="1">
    <location>
        <position position="79"/>
    </location>
    <ligand>
        <name>Zn(2+)</name>
        <dbReference type="ChEBI" id="CHEBI:29105"/>
    </ligand>
</feature>
<feature type="binding site" evidence="1">
    <location>
        <position position="236"/>
    </location>
    <ligand>
        <name>Zn(2+)</name>
        <dbReference type="ChEBI" id="CHEBI:29105"/>
    </ligand>
</feature>
<feature type="binding site" evidence="1">
    <location>
        <position position="240"/>
    </location>
    <ligand>
        <name>Zn(2+)</name>
        <dbReference type="ChEBI" id="CHEBI:29105"/>
    </ligand>
</feature>
<comment type="function">
    <text evidence="1">Catalyzes the hydrolysis of UDP-3-O-myristoyl-N-acetylglucosamine to form UDP-3-O-myristoylglucosamine and acetate, the committed step in lipid A biosynthesis.</text>
</comment>
<comment type="catalytic activity">
    <reaction evidence="1">
        <text>a UDP-3-O-[(3R)-3-hydroxyacyl]-N-acetyl-alpha-D-glucosamine + H2O = a UDP-3-O-[(3R)-3-hydroxyacyl]-alpha-D-glucosamine + acetate</text>
        <dbReference type="Rhea" id="RHEA:67816"/>
        <dbReference type="ChEBI" id="CHEBI:15377"/>
        <dbReference type="ChEBI" id="CHEBI:30089"/>
        <dbReference type="ChEBI" id="CHEBI:137740"/>
        <dbReference type="ChEBI" id="CHEBI:173225"/>
        <dbReference type="EC" id="3.5.1.108"/>
    </reaction>
</comment>
<comment type="cofactor">
    <cofactor evidence="1">
        <name>Zn(2+)</name>
        <dbReference type="ChEBI" id="CHEBI:29105"/>
    </cofactor>
</comment>
<comment type="pathway">
    <text evidence="1">Glycolipid biosynthesis; lipid IV(A) biosynthesis; lipid IV(A) from (3R)-3-hydroxytetradecanoyl-[acyl-carrier-protein] and UDP-N-acetyl-alpha-D-glucosamine: step 2/6.</text>
</comment>
<comment type="similarity">
    <text evidence="1">Belongs to the LpxC family.</text>
</comment>
<protein>
    <recommendedName>
        <fullName evidence="1">UDP-3-O-acyl-N-acetylglucosamine deacetylase</fullName>
        <shortName evidence="1">UDP-3-O-acyl-GlcNAc deacetylase</shortName>
        <ecNumber evidence="1">3.5.1.108</ecNumber>
    </recommendedName>
    <alternativeName>
        <fullName evidence="1">UDP-3-O-[R-3-hydroxymyristoyl]-N-acetylglucosamine deacetylase</fullName>
    </alternativeName>
</protein>
<evidence type="ECO:0000255" key="1">
    <source>
        <dbReference type="HAMAP-Rule" id="MF_00388"/>
    </source>
</evidence>
<gene>
    <name evidence="1" type="primary">lpxC</name>
    <name type="ordered locus">RBE_0954</name>
</gene>